<organism>
    <name type="scientific">Oryzias latipes</name>
    <name type="common">Japanese rice fish</name>
    <name type="synonym">Japanese killifish</name>
    <dbReference type="NCBI Taxonomy" id="8090"/>
    <lineage>
        <taxon>Eukaryota</taxon>
        <taxon>Metazoa</taxon>
        <taxon>Chordata</taxon>
        <taxon>Craniata</taxon>
        <taxon>Vertebrata</taxon>
        <taxon>Euteleostomi</taxon>
        <taxon>Actinopterygii</taxon>
        <taxon>Neopterygii</taxon>
        <taxon>Teleostei</taxon>
        <taxon>Neoteleostei</taxon>
        <taxon>Acanthomorphata</taxon>
        <taxon>Ovalentaria</taxon>
        <taxon>Atherinomorphae</taxon>
        <taxon>Beloniformes</taxon>
        <taxon>Adrianichthyidae</taxon>
        <taxon>Oryziinae</taxon>
        <taxon>Oryzias</taxon>
    </lineage>
</organism>
<keyword id="KW-0025">Alternative splicing</keyword>
<keyword id="KW-0131">Cell cycle</keyword>
<keyword id="KW-0132">Cell division</keyword>
<keyword id="KW-0195">Cyclin</keyword>
<keyword id="KW-0498">Mitosis</keyword>
<keyword id="KW-1185">Reference proteome</keyword>
<reference key="1">
    <citation type="journal article" date="2000" name="Zool. Sci.">
        <title>Differential expression of cyclins B1 and B2 during medaka (Oryzias latipes) spermatogenesis.</title>
        <authorList>
            <person name="Mita K."/>
            <person name="Ohbayashi T."/>
            <person name="Tomita K."/>
            <person name="Shimizu Y."/>
            <person name="Kondo T."/>
            <person name="Yamashita M."/>
        </authorList>
    </citation>
    <scope>NUCLEOTIDE SEQUENCE [MRNA] (ISOFORMS 1 AND 2)</scope>
    <source>
        <tissue>Testis</tissue>
    </source>
</reference>
<feature type="chain" id="PRO_0000080358" description="G2/mitotic-specific cyclin-B1">
    <location>
        <begin position="1"/>
        <end position="404"/>
    </location>
</feature>
<feature type="splice variant" id="VSP_001250" description="In isoform 2." evidence="2">
    <original>TAEQHTLAKYLLELSMVD</original>
    <variation>WRGVGAANCSLPPLHVLR</variation>
    <location>
        <begin position="289"/>
        <end position="306"/>
    </location>
</feature>
<feature type="splice variant" id="VSP_001251" description="In isoform 2." evidence="2">
    <location>
        <begin position="307"/>
        <end position="404"/>
    </location>
</feature>
<feature type="sequence conflict" description="In Ref. 1; BAA89699." evidence="3" ref="1">
    <original>Q</original>
    <variation>H</variation>
    <location>
        <position position="158"/>
    </location>
</feature>
<gene>
    <name type="primary">ccnb1</name>
</gene>
<accession>Q9IBG1</accession>
<accession>Q9IBF9</accession>
<evidence type="ECO:0000250" key="1"/>
<evidence type="ECO:0000303" key="2">
    <source ref="1"/>
</evidence>
<evidence type="ECO:0000305" key="3"/>
<sequence>MALRVTRNRLASTRAELGGKTCSVAGPTQKPRAALGEIGNVAVINKDVTKKTIKTEVAKKTKIPAKAEKIELPKAAVVPVKPAPEVQVTEVPDQAEPASPTPMETSGCESADLCQAFSDVILNTAIRDVDADDYDNPMLCSEYVKDIYKYLRQLEMEQSVKPNYLEGQEITGNMRAILIDWLVQVGLKFRLLQETMYMTVGIIDRFLQDHPVPKKQLQLVGVTAMFLASKYEEMYPPEISDFAYVTDRAYTTAQIRDMEMTILRVLKFQLGRPLPLQFLRRASKIYEVTAEQHTLAKYLLELSMVDYDMAHFSPSLVASAALALTLKVLDAGEWDVTLQHYMEYTAETLTPVMAHIAKNVVKVNNGQTKHMAIKGKYSTSKQMRIATISQLKSSVVKDLATQIS</sequence>
<protein>
    <recommendedName>
        <fullName>G2/mitotic-specific cyclin-B1</fullName>
    </recommendedName>
</protein>
<name>CCNB1_ORYLA</name>
<comment type="function">
    <text evidence="1">Essential for the control of the cell cycle at the G2/M (mitosis) transition.</text>
</comment>
<comment type="subunit">
    <text evidence="1">Interacts with the CDK1 protein kinase to form a serine/threonine kinase holoenzyme complex also known as maturation promoting factor (MPF). The cyclin subunit imparts substrate specificity to the complex (By similarity).</text>
</comment>
<comment type="alternative products">
    <event type="alternative splicing"/>
    <isoform>
        <id>Q9IBG1-1</id>
        <name>1</name>
        <sequence type="displayed"/>
    </isoform>
    <isoform>
        <id>Q9IBG1-2</id>
        <name>2</name>
        <sequence type="described" ref="VSP_001250 VSP_001251"/>
    </isoform>
</comment>
<comment type="developmental stage">
    <text>Accumulates steadily during G2 and is abruptly destroyed at mitosis.</text>
</comment>
<comment type="similarity">
    <text evidence="3">Belongs to the cyclin family. Cyclin AB subfamily.</text>
</comment>
<dbReference type="EMBL" id="AB030069">
    <property type="protein sequence ID" value="BAA89697.1"/>
    <property type="molecule type" value="mRNA"/>
</dbReference>
<dbReference type="EMBL" id="AB030071">
    <property type="protein sequence ID" value="BAA89699.1"/>
    <property type="molecule type" value="mRNA"/>
</dbReference>
<dbReference type="RefSeq" id="NP_001098137.1">
    <property type="nucleotide sequence ID" value="NM_001104667.1"/>
</dbReference>
<dbReference type="SMR" id="Q9IBG1"/>
<dbReference type="STRING" id="8090.ENSORLP00000017132"/>
<dbReference type="GeneID" id="100049212"/>
<dbReference type="KEGG" id="ola:100049212"/>
<dbReference type="CTD" id="891"/>
<dbReference type="eggNOG" id="KOG0653">
    <property type="taxonomic scope" value="Eukaryota"/>
</dbReference>
<dbReference type="InParanoid" id="Q9IBG1"/>
<dbReference type="OrthoDB" id="5590282at2759"/>
<dbReference type="Proteomes" id="UP000001038">
    <property type="component" value="Unplaced"/>
</dbReference>
<dbReference type="Proteomes" id="UP000265180">
    <property type="component" value="Chromosome 9"/>
</dbReference>
<dbReference type="Proteomes" id="UP000265200">
    <property type="component" value="Chromosome 9"/>
</dbReference>
<dbReference type="GO" id="GO:0097125">
    <property type="term" value="C:cyclin B1-CDK1 complex"/>
    <property type="evidence" value="ECO:0000318"/>
    <property type="project" value="GO_Central"/>
</dbReference>
<dbReference type="GO" id="GO:0005737">
    <property type="term" value="C:cytoplasm"/>
    <property type="evidence" value="ECO:0000318"/>
    <property type="project" value="GO_Central"/>
</dbReference>
<dbReference type="GO" id="GO:0005815">
    <property type="term" value="C:microtubule organizing center"/>
    <property type="evidence" value="ECO:0000318"/>
    <property type="project" value="GO_Central"/>
</dbReference>
<dbReference type="GO" id="GO:0005634">
    <property type="term" value="C:nucleus"/>
    <property type="evidence" value="ECO:0000318"/>
    <property type="project" value="GO_Central"/>
</dbReference>
<dbReference type="GO" id="GO:0016538">
    <property type="term" value="F:cyclin-dependent protein serine/threonine kinase regulator activity"/>
    <property type="evidence" value="ECO:0000318"/>
    <property type="project" value="GO_Central"/>
</dbReference>
<dbReference type="GO" id="GO:0051301">
    <property type="term" value="P:cell division"/>
    <property type="evidence" value="ECO:0007669"/>
    <property type="project" value="UniProtKB-KW"/>
</dbReference>
<dbReference type="GO" id="GO:0000082">
    <property type="term" value="P:G1/S transition of mitotic cell cycle"/>
    <property type="evidence" value="ECO:0000318"/>
    <property type="project" value="GO_Central"/>
</dbReference>
<dbReference type="GO" id="GO:0007080">
    <property type="term" value="P:mitotic metaphase chromosome alignment"/>
    <property type="evidence" value="ECO:0000318"/>
    <property type="project" value="GO_Central"/>
</dbReference>
<dbReference type="CDD" id="cd20565">
    <property type="entry name" value="CYCLIN_CCNB1_rpt1"/>
    <property type="match status" value="1"/>
</dbReference>
<dbReference type="FunFam" id="1.10.472.10:FF:000198">
    <property type="entry name" value="G2/mitotic-specific cyclin-B1"/>
    <property type="match status" value="1"/>
</dbReference>
<dbReference type="Gene3D" id="1.10.472.10">
    <property type="entry name" value="Cyclin-like"/>
    <property type="match status" value="2"/>
</dbReference>
<dbReference type="InterPro" id="IPR048026">
    <property type="entry name" value="CCNB1_first_cyclin-box"/>
</dbReference>
<dbReference type="InterPro" id="IPR039361">
    <property type="entry name" value="Cyclin"/>
</dbReference>
<dbReference type="InterPro" id="IPR013763">
    <property type="entry name" value="Cyclin-like_dom"/>
</dbReference>
<dbReference type="InterPro" id="IPR036915">
    <property type="entry name" value="Cyclin-like_sf"/>
</dbReference>
<dbReference type="InterPro" id="IPR046965">
    <property type="entry name" value="Cyclin_A/B-like"/>
</dbReference>
<dbReference type="InterPro" id="IPR004367">
    <property type="entry name" value="Cyclin_C-dom"/>
</dbReference>
<dbReference type="InterPro" id="IPR006671">
    <property type="entry name" value="Cyclin_N"/>
</dbReference>
<dbReference type="InterPro" id="IPR048258">
    <property type="entry name" value="Cyclins_cyclin-box"/>
</dbReference>
<dbReference type="PANTHER" id="PTHR10177">
    <property type="entry name" value="CYCLINS"/>
    <property type="match status" value="1"/>
</dbReference>
<dbReference type="Pfam" id="PF02984">
    <property type="entry name" value="Cyclin_C"/>
    <property type="match status" value="1"/>
</dbReference>
<dbReference type="Pfam" id="PF00134">
    <property type="entry name" value="Cyclin_N"/>
    <property type="match status" value="1"/>
</dbReference>
<dbReference type="PIRSF" id="PIRSF001771">
    <property type="entry name" value="Cyclin_A_B_D_E"/>
    <property type="match status" value="1"/>
</dbReference>
<dbReference type="SMART" id="SM00385">
    <property type="entry name" value="CYCLIN"/>
    <property type="match status" value="2"/>
</dbReference>
<dbReference type="SMART" id="SM01332">
    <property type="entry name" value="Cyclin_C"/>
    <property type="match status" value="1"/>
</dbReference>
<dbReference type="SUPFAM" id="SSF47954">
    <property type="entry name" value="Cyclin-like"/>
    <property type="match status" value="2"/>
</dbReference>
<dbReference type="PROSITE" id="PS00292">
    <property type="entry name" value="CYCLINS"/>
    <property type="match status" value="1"/>
</dbReference>
<proteinExistence type="evidence at transcript level"/>